<comment type="function">
    <text evidence="1">Catalyzes the phosphorylation of the position 2 hydroxy group of 4-diphosphocytidyl-2C-methyl-D-erythritol.</text>
</comment>
<comment type="catalytic activity">
    <reaction evidence="1">
        <text>4-CDP-2-C-methyl-D-erythritol + ATP = 4-CDP-2-C-methyl-D-erythritol 2-phosphate + ADP + H(+)</text>
        <dbReference type="Rhea" id="RHEA:18437"/>
        <dbReference type="ChEBI" id="CHEBI:15378"/>
        <dbReference type="ChEBI" id="CHEBI:30616"/>
        <dbReference type="ChEBI" id="CHEBI:57823"/>
        <dbReference type="ChEBI" id="CHEBI:57919"/>
        <dbReference type="ChEBI" id="CHEBI:456216"/>
        <dbReference type="EC" id="2.7.1.148"/>
    </reaction>
</comment>
<comment type="pathway">
    <text evidence="1">Isoprenoid biosynthesis; isopentenyl diphosphate biosynthesis via DXP pathway; isopentenyl diphosphate from 1-deoxy-D-xylulose 5-phosphate: step 3/6.</text>
</comment>
<comment type="similarity">
    <text evidence="1">Belongs to the GHMP kinase family. IspE subfamily.</text>
</comment>
<accession>B0BAR0</accession>
<name>ISPE_CHLTB</name>
<gene>
    <name evidence="1" type="primary">ispE</name>
    <name type="ordered locus">CTLon_0174</name>
</gene>
<protein>
    <recommendedName>
        <fullName evidence="1">4-diphosphocytidyl-2-C-methyl-D-erythritol kinase</fullName>
        <shortName evidence="1">CMK</shortName>
        <ecNumber evidence="1">2.7.1.148</ecNumber>
    </recommendedName>
    <alternativeName>
        <fullName evidence="1">4-(cytidine-5'-diphospho)-2-C-methyl-D-erythritol kinase</fullName>
    </alternativeName>
</protein>
<sequence length="288" mass="31885">MHFLSPAKLNLFLQILGRREDDFHEIVTRYQAIAFGDQLSLSISSRDSLQVINACHLETPSNSIWKSVALFRRYTGITTPVSWRVVKQIPVGAGLAGGSSNAATALFALNQIFKTGLSDEEMRSLAEQIGMDTPFFFSTGAALGVARGEKIIALEESVSDRYVLYFSSEGVLTSRAFAVVQPSDCSSRKNLEYTQNDLEKPVFRLRLDLKEKKHWLESLWAELPVHIGLTGSGATLFVRYPEILEEDPSYAAQIQRAVTLSGGLLTSPIRRDPTAWYSIYSESALAAT</sequence>
<feature type="chain" id="PRO_1000092075" description="4-diphosphocytidyl-2-C-methyl-D-erythritol kinase">
    <location>
        <begin position="1"/>
        <end position="288"/>
    </location>
</feature>
<feature type="active site" evidence="1">
    <location>
        <position position="8"/>
    </location>
</feature>
<feature type="active site" evidence="1">
    <location>
        <position position="132"/>
    </location>
</feature>
<feature type="binding site" evidence="1">
    <location>
        <begin position="90"/>
        <end position="100"/>
    </location>
    <ligand>
        <name>ATP</name>
        <dbReference type="ChEBI" id="CHEBI:30616"/>
    </ligand>
</feature>
<proteinExistence type="inferred from homology"/>
<reference key="1">
    <citation type="journal article" date="2008" name="Genome Res.">
        <title>Chlamydia trachomatis: genome sequence analysis of lymphogranuloma venereum isolates.</title>
        <authorList>
            <person name="Thomson N.R."/>
            <person name="Holden M.T.G."/>
            <person name="Carder C."/>
            <person name="Lennard N."/>
            <person name="Lockey S.J."/>
            <person name="Marsh P."/>
            <person name="Skipp P."/>
            <person name="O'Connor C.D."/>
            <person name="Goodhead I."/>
            <person name="Norbertzcak H."/>
            <person name="Harris B."/>
            <person name="Ormond D."/>
            <person name="Rance R."/>
            <person name="Quail M.A."/>
            <person name="Parkhill J."/>
            <person name="Stephens R.S."/>
            <person name="Clarke I.N."/>
        </authorList>
    </citation>
    <scope>NUCLEOTIDE SEQUENCE [LARGE SCALE GENOMIC DNA]</scope>
    <source>
        <strain>UCH-1/proctitis</strain>
    </source>
</reference>
<dbReference type="EC" id="2.7.1.148" evidence="1"/>
<dbReference type="EMBL" id="AM884177">
    <property type="protein sequence ID" value="CAP06572.1"/>
    <property type="molecule type" value="Genomic_DNA"/>
</dbReference>
<dbReference type="RefSeq" id="WP_009873415.1">
    <property type="nucleotide sequence ID" value="NC_010280.2"/>
</dbReference>
<dbReference type="SMR" id="B0BAR0"/>
<dbReference type="KEGG" id="ctl:CTLon_0174"/>
<dbReference type="HOGENOM" id="CLU_053057_3_0_0"/>
<dbReference type="UniPathway" id="UPA00056">
    <property type="reaction ID" value="UER00094"/>
</dbReference>
<dbReference type="Proteomes" id="UP001154401">
    <property type="component" value="Chromosome"/>
</dbReference>
<dbReference type="GO" id="GO:0050515">
    <property type="term" value="F:4-(cytidine 5'-diphospho)-2-C-methyl-D-erythritol kinase activity"/>
    <property type="evidence" value="ECO:0007669"/>
    <property type="project" value="UniProtKB-UniRule"/>
</dbReference>
<dbReference type="GO" id="GO:0005524">
    <property type="term" value="F:ATP binding"/>
    <property type="evidence" value="ECO:0007669"/>
    <property type="project" value="UniProtKB-UniRule"/>
</dbReference>
<dbReference type="GO" id="GO:0019288">
    <property type="term" value="P:isopentenyl diphosphate biosynthetic process, methylerythritol 4-phosphate pathway"/>
    <property type="evidence" value="ECO:0007669"/>
    <property type="project" value="UniProtKB-UniRule"/>
</dbReference>
<dbReference type="GO" id="GO:0016114">
    <property type="term" value="P:terpenoid biosynthetic process"/>
    <property type="evidence" value="ECO:0007669"/>
    <property type="project" value="InterPro"/>
</dbReference>
<dbReference type="Gene3D" id="3.30.230.10">
    <property type="match status" value="1"/>
</dbReference>
<dbReference type="Gene3D" id="3.30.70.890">
    <property type="entry name" value="GHMP kinase, C-terminal domain"/>
    <property type="match status" value="1"/>
</dbReference>
<dbReference type="HAMAP" id="MF_00061">
    <property type="entry name" value="IspE"/>
    <property type="match status" value="1"/>
</dbReference>
<dbReference type="InterPro" id="IPR036554">
    <property type="entry name" value="GHMP_kinase_C_sf"/>
</dbReference>
<dbReference type="InterPro" id="IPR006204">
    <property type="entry name" value="GHMP_kinase_N_dom"/>
</dbReference>
<dbReference type="InterPro" id="IPR004424">
    <property type="entry name" value="IspE"/>
</dbReference>
<dbReference type="InterPro" id="IPR020568">
    <property type="entry name" value="Ribosomal_Su5_D2-typ_SF"/>
</dbReference>
<dbReference type="InterPro" id="IPR014721">
    <property type="entry name" value="Ribsml_uS5_D2-typ_fold_subgr"/>
</dbReference>
<dbReference type="NCBIfam" id="TIGR00154">
    <property type="entry name" value="ispE"/>
    <property type="match status" value="1"/>
</dbReference>
<dbReference type="PANTHER" id="PTHR43527">
    <property type="entry name" value="4-DIPHOSPHOCYTIDYL-2-C-METHYL-D-ERYTHRITOL KINASE, CHLOROPLASTIC"/>
    <property type="match status" value="1"/>
</dbReference>
<dbReference type="PANTHER" id="PTHR43527:SF2">
    <property type="entry name" value="4-DIPHOSPHOCYTIDYL-2-C-METHYL-D-ERYTHRITOL KINASE, CHLOROPLASTIC"/>
    <property type="match status" value="1"/>
</dbReference>
<dbReference type="Pfam" id="PF00288">
    <property type="entry name" value="GHMP_kinases_N"/>
    <property type="match status" value="1"/>
</dbReference>
<dbReference type="PIRSF" id="PIRSF010376">
    <property type="entry name" value="IspE"/>
    <property type="match status" value="1"/>
</dbReference>
<dbReference type="SUPFAM" id="SSF55060">
    <property type="entry name" value="GHMP Kinase, C-terminal domain"/>
    <property type="match status" value="1"/>
</dbReference>
<dbReference type="SUPFAM" id="SSF54211">
    <property type="entry name" value="Ribosomal protein S5 domain 2-like"/>
    <property type="match status" value="1"/>
</dbReference>
<organism>
    <name type="scientific">Chlamydia trachomatis serovar L2b (strain UCH-1/proctitis)</name>
    <dbReference type="NCBI Taxonomy" id="471473"/>
    <lineage>
        <taxon>Bacteria</taxon>
        <taxon>Pseudomonadati</taxon>
        <taxon>Chlamydiota</taxon>
        <taxon>Chlamydiia</taxon>
        <taxon>Chlamydiales</taxon>
        <taxon>Chlamydiaceae</taxon>
        <taxon>Chlamydia/Chlamydophila group</taxon>
        <taxon>Chlamydia</taxon>
    </lineage>
</organism>
<keyword id="KW-0067">ATP-binding</keyword>
<keyword id="KW-0414">Isoprene biosynthesis</keyword>
<keyword id="KW-0418">Kinase</keyword>
<keyword id="KW-0547">Nucleotide-binding</keyword>
<keyword id="KW-0808">Transferase</keyword>
<evidence type="ECO:0000255" key="1">
    <source>
        <dbReference type="HAMAP-Rule" id="MF_00061"/>
    </source>
</evidence>